<keyword id="KW-0963">Cytoplasm</keyword>
<keyword id="KW-0444">Lipid biosynthesis</keyword>
<keyword id="KW-0443">Lipid metabolism</keyword>
<keyword id="KW-0520">NAD</keyword>
<keyword id="KW-0521">NADP</keyword>
<keyword id="KW-0547">Nucleotide-binding</keyword>
<keyword id="KW-0560">Oxidoreductase</keyword>
<keyword id="KW-0594">Phospholipid biosynthesis</keyword>
<keyword id="KW-1208">Phospholipid metabolism</keyword>
<accession>P61741</accession>
<feature type="chain" id="PRO_0000137975" description="Glycerol-3-phosphate dehydrogenase [NAD(P)+]">
    <location>
        <begin position="1"/>
        <end position="339"/>
    </location>
</feature>
<feature type="active site" description="Proton acceptor" evidence="1">
    <location>
        <position position="195"/>
    </location>
</feature>
<feature type="binding site" evidence="1">
    <location>
        <position position="11"/>
    </location>
    <ligand>
        <name>NADPH</name>
        <dbReference type="ChEBI" id="CHEBI:57783"/>
    </ligand>
</feature>
<feature type="binding site" evidence="1">
    <location>
        <position position="12"/>
    </location>
    <ligand>
        <name>NADPH</name>
        <dbReference type="ChEBI" id="CHEBI:57783"/>
    </ligand>
</feature>
<feature type="binding site" evidence="1">
    <location>
        <position position="109"/>
    </location>
    <ligand>
        <name>NADPH</name>
        <dbReference type="ChEBI" id="CHEBI:57783"/>
    </ligand>
</feature>
<feature type="binding site" evidence="1">
    <location>
        <position position="109"/>
    </location>
    <ligand>
        <name>sn-glycerol 3-phosphate</name>
        <dbReference type="ChEBI" id="CHEBI:57597"/>
    </ligand>
</feature>
<feature type="binding site" evidence="1">
    <location>
        <position position="140"/>
    </location>
    <ligand>
        <name>sn-glycerol 3-phosphate</name>
        <dbReference type="ChEBI" id="CHEBI:57597"/>
    </ligand>
</feature>
<feature type="binding site" evidence="1">
    <location>
        <position position="142"/>
    </location>
    <ligand>
        <name>sn-glycerol 3-phosphate</name>
        <dbReference type="ChEBI" id="CHEBI:57597"/>
    </ligand>
</feature>
<feature type="binding site" evidence="1">
    <location>
        <position position="144"/>
    </location>
    <ligand>
        <name>NADPH</name>
        <dbReference type="ChEBI" id="CHEBI:57783"/>
    </ligand>
</feature>
<feature type="binding site" evidence="1">
    <location>
        <position position="195"/>
    </location>
    <ligand>
        <name>sn-glycerol 3-phosphate</name>
        <dbReference type="ChEBI" id="CHEBI:57597"/>
    </ligand>
</feature>
<feature type="binding site" evidence="1">
    <location>
        <position position="249"/>
    </location>
    <ligand>
        <name>sn-glycerol 3-phosphate</name>
        <dbReference type="ChEBI" id="CHEBI:57597"/>
    </ligand>
</feature>
<feature type="binding site" evidence="1">
    <location>
        <position position="259"/>
    </location>
    <ligand>
        <name>sn-glycerol 3-phosphate</name>
        <dbReference type="ChEBI" id="CHEBI:57597"/>
    </ligand>
</feature>
<feature type="binding site" evidence="1">
    <location>
        <position position="260"/>
    </location>
    <ligand>
        <name>NADPH</name>
        <dbReference type="ChEBI" id="CHEBI:57783"/>
    </ligand>
</feature>
<feature type="binding site" evidence="1">
    <location>
        <position position="260"/>
    </location>
    <ligand>
        <name>sn-glycerol 3-phosphate</name>
        <dbReference type="ChEBI" id="CHEBI:57597"/>
    </ligand>
</feature>
<feature type="binding site" evidence="1">
    <location>
        <position position="261"/>
    </location>
    <ligand>
        <name>sn-glycerol 3-phosphate</name>
        <dbReference type="ChEBI" id="CHEBI:57597"/>
    </ligand>
</feature>
<feature type="binding site" evidence="1">
    <location>
        <position position="284"/>
    </location>
    <ligand>
        <name>NADPH</name>
        <dbReference type="ChEBI" id="CHEBI:57783"/>
    </ligand>
</feature>
<feature type="binding site" evidence="1">
    <location>
        <position position="286"/>
    </location>
    <ligand>
        <name>NADPH</name>
        <dbReference type="ChEBI" id="CHEBI:57783"/>
    </ligand>
</feature>
<comment type="function">
    <text evidence="1">Catalyzes the reduction of the glycolytic intermediate dihydroxyacetone phosphate (DHAP) to sn-glycerol 3-phosphate (G3P), the key precursor for phospholipid synthesis.</text>
</comment>
<comment type="catalytic activity">
    <reaction evidence="1">
        <text>sn-glycerol 3-phosphate + NAD(+) = dihydroxyacetone phosphate + NADH + H(+)</text>
        <dbReference type="Rhea" id="RHEA:11092"/>
        <dbReference type="ChEBI" id="CHEBI:15378"/>
        <dbReference type="ChEBI" id="CHEBI:57540"/>
        <dbReference type="ChEBI" id="CHEBI:57597"/>
        <dbReference type="ChEBI" id="CHEBI:57642"/>
        <dbReference type="ChEBI" id="CHEBI:57945"/>
        <dbReference type="EC" id="1.1.1.94"/>
    </reaction>
    <physiologicalReaction direction="right-to-left" evidence="1">
        <dbReference type="Rhea" id="RHEA:11094"/>
    </physiologicalReaction>
</comment>
<comment type="catalytic activity">
    <reaction evidence="1">
        <text>sn-glycerol 3-phosphate + NADP(+) = dihydroxyacetone phosphate + NADPH + H(+)</text>
        <dbReference type="Rhea" id="RHEA:11096"/>
        <dbReference type="ChEBI" id="CHEBI:15378"/>
        <dbReference type="ChEBI" id="CHEBI:57597"/>
        <dbReference type="ChEBI" id="CHEBI:57642"/>
        <dbReference type="ChEBI" id="CHEBI:57783"/>
        <dbReference type="ChEBI" id="CHEBI:58349"/>
        <dbReference type="EC" id="1.1.1.94"/>
    </reaction>
    <physiologicalReaction direction="right-to-left" evidence="1">
        <dbReference type="Rhea" id="RHEA:11098"/>
    </physiologicalReaction>
</comment>
<comment type="pathway">
    <text evidence="1">Membrane lipid metabolism; glycerophospholipid metabolism.</text>
</comment>
<comment type="subcellular location">
    <subcellularLocation>
        <location evidence="1">Cytoplasm</location>
    </subcellularLocation>
</comment>
<comment type="similarity">
    <text evidence="1">Belongs to the NAD-dependent glycerol-3-phosphate dehydrogenase family.</text>
</comment>
<dbReference type="EC" id="1.1.1.94" evidence="1"/>
<dbReference type="EMBL" id="AE017198">
    <property type="protein sequence ID" value="AAS08672.1"/>
    <property type="molecule type" value="Genomic_DNA"/>
</dbReference>
<dbReference type="RefSeq" id="WP_011161769.1">
    <property type="nucleotide sequence ID" value="NC_005362.1"/>
</dbReference>
<dbReference type="SMR" id="P61741"/>
<dbReference type="KEGG" id="ljo:LJ_0851"/>
<dbReference type="eggNOG" id="COG0240">
    <property type="taxonomic scope" value="Bacteria"/>
</dbReference>
<dbReference type="HOGENOM" id="CLU_033449_0_2_9"/>
<dbReference type="UniPathway" id="UPA00940"/>
<dbReference type="Proteomes" id="UP000000581">
    <property type="component" value="Chromosome"/>
</dbReference>
<dbReference type="GO" id="GO:0005829">
    <property type="term" value="C:cytosol"/>
    <property type="evidence" value="ECO:0007669"/>
    <property type="project" value="TreeGrafter"/>
</dbReference>
<dbReference type="GO" id="GO:0047952">
    <property type="term" value="F:glycerol-3-phosphate dehydrogenase [NAD(P)+] activity"/>
    <property type="evidence" value="ECO:0007669"/>
    <property type="project" value="UniProtKB-UniRule"/>
</dbReference>
<dbReference type="GO" id="GO:0051287">
    <property type="term" value="F:NAD binding"/>
    <property type="evidence" value="ECO:0007669"/>
    <property type="project" value="InterPro"/>
</dbReference>
<dbReference type="GO" id="GO:0005975">
    <property type="term" value="P:carbohydrate metabolic process"/>
    <property type="evidence" value="ECO:0007669"/>
    <property type="project" value="InterPro"/>
</dbReference>
<dbReference type="GO" id="GO:0046167">
    <property type="term" value="P:glycerol-3-phosphate biosynthetic process"/>
    <property type="evidence" value="ECO:0007669"/>
    <property type="project" value="UniProtKB-UniRule"/>
</dbReference>
<dbReference type="GO" id="GO:0046168">
    <property type="term" value="P:glycerol-3-phosphate catabolic process"/>
    <property type="evidence" value="ECO:0007669"/>
    <property type="project" value="InterPro"/>
</dbReference>
<dbReference type="GO" id="GO:0006650">
    <property type="term" value="P:glycerophospholipid metabolic process"/>
    <property type="evidence" value="ECO:0007669"/>
    <property type="project" value="UniProtKB-UniRule"/>
</dbReference>
<dbReference type="GO" id="GO:0008654">
    <property type="term" value="P:phospholipid biosynthetic process"/>
    <property type="evidence" value="ECO:0007669"/>
    <property type="project" value="UniProtKB-KW"/>
</dbReference>
<dbReference type="FunFam" id="1.10.1040.10:FF:000001">
    <property type="entry name" value="Glycerol-3-phosphate dehydrogenase [NAD(P)+]"/>
    <property type="match status" value="1"/>
</dbReference>
<dbReference type="FunFam" id="3.40.50.720:FF:000019">
    <property type="entry name" value="Glycerol-3-phosphate dehydrogenase [NAD(P)+]"/>
    <property type="match status" value="1"/>
</dbReference>
<dbReference type="Gene3D" id="1.10.1040.10">
    <property type="entry name" value="N-(1-d-carboxylethyl)-l-norvaline Dehydrogenase, domain 2"/>
    <property type="match status" value="1"/>
</dbReference>
<dbReference type="Gene3D" id="3.40.50.720">
    <property type="entry name" value="NAD(P)-binding Rossmann-like Domain"/>
    <property type="match status" value="1"/>
</dbReference>
<dbReference type="HAMAP" id="MF_00394">
    <property type="entry name" value="NAD_Glyc3P_dehydrog"/>
    <property type="match status" value="1"/>
</dbReference>
<dbReference type="InterPro" id="IPR008927">
    <property type="entry name" value="6-PGluconate_DH-like_C_sf"/>
</dbReference>
<dbReference type="InterPro" id="IPR013328">
    <property type="entry name" value="6PGD_dom2"/>
</dbReference>
<dbReference type="InterPro" id="IPR006168">
    <property type="entry name" value="G3P_DH_NAD-dep"/>
</dbReference>
<dbReference type="InterPro" id="IPR006109">
    <property type="entry name" value="G3P_DH_NAD-dep_C"/>
</dbReference>
<dbReference type="InterPro" id="IPR011128">
    <property type="entry name" value="G3P_DH_NAD-dep_N"/>
</dbReference>
<dbReference type="InterPro" id="IPR036291">
    <property type="entry name" value="NAD(P)-bd_dom_sf"/>
</dbReference>
<dbReference type="NCBIfam" id="NF000940">
    <property type="entry name" value="PRK00094.1-2"/>
    <property type="match status" value="1"/>
</dbReference>
<dbReference type="NCBIfam" id="NF000941">
    <property type="entry name" value="PRK00094.1-3"/>
    <property type="match status" value="1"/>
</dbReference>
<dbReference type="NCBIfam" id="NF000942">
    <property type="entry name" value="PRK00094.1-4"/>
    <property type="match status" value="1"/>
</dbReference>
<dbReference type="PANTHER" id="PTHR11728">
    <property type="entry name" value="GLYCEROL-3-PHOSPHATE DEHYDROGENASE"/>
    <property type="match status" value="1"/>
</dbReference>
<dbReference type="PANTHER" id="PTHR11728:SF1">
    <property type="entry name" value="GLYCEROL-3-PHOSPHATE DEHYDROGENASE [NAD(+)] 2, CHLOROPLASTIC"/>
    <property type="match status" value="1"/>
</dbReference>
<dbReference type="Pfam" id="PF07479">
    <property type="entry name" value="NAD_Gly3P_dh_C"/>
    <property type="match status" value="1"/>
</dbReference>
<dbReference type="Pfam" id="PF01210">
    <property type="entry name" value="NAD_Gly3P_dh_N"/>
    <property type="match status" value="1"/>
</dbReference>
<dbReference type="PIRSF" id="PIRSF000114">
    <property type="entry name" value="Glycerol-3-P_dh"/>
    <property type="match status" value="1"/>
</dbReference>
<dbReference type="PRINTS" id="PR00077">
    <property type="entry name" value="GPDHDRGNASE"/>
</dbReference>
<dbReference type="SUPFAM" id="SSF48179">
    <property type="entry name" value="6-phosphogluconate dehydrogenase C-terminal domain-like"/>
    <property type="match status" value="1"/>
</dbReference>
<dbReference type="SUPFAM" id="SSF51735">
    <property type="entry name" value="NAD(P)-binding Rossmann-fold domains"/>
    <property type="match status" value="1"/>
</dbReference>
<dbReference type="PROSITE" id="PS00957">
    <property type="entry name" value="NAD_G3PDH"/>
    <property type="match status" value="1"/>
</dbReference>
<protein>
    <recommendedName>
        <fullName evidence="1">Glycerol-3-phosphate dehydrogenase [NAD(P)+]</fullName>
        <ecNumber evidence="1">1.1.1.94</ecNumber>
    </recommendedName>
    <alternativeName>
        <fullName evidence="1">NAD(P)(+)-dependent glycerol-3-phosphate dehydrogenase</fullName>
    </alternativeName>
    <alternativeName>
        <fullName evidence="1">NAD(P)H-dependent dihydroxyacetone-phosphate reductase</fullName>
    </alternativeName>
</protein>
<gene>
    <name evidence="1" type="primary">gpsA</name>
    <name type="ordered locus">LJ_0851</name>
</gene>
<organism>
    <name type="scientific">Lactobacillus johnsonii (strain CNCM I-12250 / La1 / NCC 533)</name>
    <dbReference type="NCBI Taxonomy" id="257314"/>
    <lineage>
        <taxon>Bacteria</taxon>
        <taxon>Bacillati</taxon>
        <taxon>Bacillota</taxon>
        <taxon>Bacilli</taxon>
        <taxon>Lactobacillales</taxon>
        <taxon>Lactobacillaceae</taxon>
        <taxon>Lactobacillus</taxon>
    </lineage>
</organism>
<evidence type="ECO:0000255" key="1">
    <source>
        <dbReference type="HAMAP-Rule" id="MF_00394"/>
    </source>
</evidence>
<sequence length="339" mass="36437">MAKIAVLGNGSWGSVLGSMLADNGNDVVLYGNIDSVNQEINEHHTNTHYMKNWKLNPNVPATGDLEKALDGAEIILFVLPTKAVRIVAKNARKILDKTGATPLLVTATKGIEPGSKKLISDILTEEVYPNDSEKIVAISGPSHAENVAQKDLTAIACASTSEENAKRVQKIFSNNYVRFYTNDDLVGVEVGGAVKNVIAIAAGILVGKGYGDDAKAALMTRGLAEITRLGVKYFGAKPMTFSGLSGIGDLIVTATSQNSRNWRAGKQIGEGKSLDYVLDHMGQVVEGATTVKAVHELAEEKNIDMPISEAIYRVLYENADVDQEIKTMMGRNPKPEIQL</sequence>
<reference key="1">
    <citation type="journal article" date="2004" name="Proc. Natl. Acad. Sci. U.S.A.">
        <title>The genome sequence of the probiotic intestinal bacterium Lactobacillus johnsonii NCC 533.</title>
        <authorList>
            <person name="Pridmore R.D."/>
            <person name="Berger B."/>
            <person name="Desiere F."/>
            <person name="Vilanova D."/>
            <person name="Barretto C."/>
            <person name="Pittet A.-C."/>
            <person name="Zwahlen M.-C."/>
            <person name="Rouvet M."/>
            <person name="Altermann E."/>
            <person name="Barrangou R."/>
            <person name="Mollet B."/>
            <person name="Mercenier A."/>
            <person name="Klaenhammer T."/>
            <person name="Arigoni F."/>
            <person name="Schell M.A."/>
        </authorList>
    </citation>
    <scope>NUCLEOTIDE SEQUENCE [LARGE SCALE GENOMIC DNA]</scope>
    <source>
        <strain>CNCM I-1225 / La1 / NCC 533</strain>
    </source>
</reference>
<name>GPDA_LACJO</name>
<proteinExistence type="inferred from homology"/>